<feature type="transit peptide" description="Chloroplast" evidence="2">
    <location>
        <begin position="1"/>
        <end position="45"/>
    </location>
</feature>
<feature type="chain" id="PRO_0000412576" description="Chaperone protein ClpC2, chloroplastic">
    <location>
        <begin position="46"/>
        <end position="952"/>
    </location>
</feature>
<feature type="domain" description="Clp R" evidence="4">
    <location>
        <begin position="115"/>
        <end position="257"/>
    </location>
</feature>
<feature type="domain" description="UVR" evidence="3">
    <location>
        <begin position="532"/>
        <end position="567"/>
    </location>
</feature>
<feature type="region of interest" description="Repeat 1" evidence="4">
    <location>
        <begin position="118"/>
        <end position="183"/>
    </location>
</feature>
<feature type="region of interest" description="Repeat 2" evidence="4">
    <location>
        <begin position="193"/>
        <end position="257"/>
    </location>
</feature>
<feature type="region of interest" description="I" evidence="1">
    <location>
        <begin position="278"/>
        <end position="525"/>
    </location>
</feature>
<feature type="region of interest" description="II" evidence="1">
    <location>
        <begin position="592"/>
        <end position="783"/>
    </location>
</feature>
<feature type="binding site" evidence="2">
    <location>
        <begin position="323"/>
        <end position="330"/>
    </location>
    <ligand>
        <name>ATP</name>
        <dbReference type="ChEBI" id="CHEBI:30616"/>
    </ligand>
</feature>
<feature type="binding site" evidence="2">
    <location>
        <begin position="666"/>
        <end position="673"/>
    </location>
    <ligand>
        <name>ATP</name>
        <dbReference type="ChEBI" id="CHEBI:30616"/>
    </ligand>
</feature>
<feature type="sequence conflict" description="In Ref. 2; CAB87915." evidence="18" ref="2">
    <original>V</original>
    <variation>M</variation>
    <location>
        <position position="307"/>
    </location>
</feature>
<feature type="sequence conflict" description="In Ref. 4; AAL10478." evidence="18" ref="4">
    <original>E</original>
    <variation>G</variation>
    <location>
        <position position="461"/>
    </location>
</feature>
<evidence type="ECO:0000250" key="1"/>
<evidence type="ECO:0000255" key="2"/>
<evidence type="ECO:0000255" key="3">
    <source>
        <dbReference type="PROSITE-ProRule" id="PRU00217"/>
    </source>
</evidence>
<evidence type="ECO:0000255" key="4">
    <source>
        <dbReference type="PROSITE-ProRule" id="PRU01251"/>
    </source>
</evidence>
<evidence type="ECO:0000269" key="5">
    <source>
    </source>
</evidence>
<evidence type="ECO:0000269" key="6">
    <source>
    </source>
</evidence>
<evidence type="ECO:0000269" key="7">
    <source>
    </source>
</evidence>
<evidence type="ECO:0000269" key="8">
    <source>
    </source>
</evidence>
<evidence type="ECO:0000269" key="9">
    <source>
    </source>
</evidence>
<evidence type="ECO:0000269" key="10">
    <source>
    </source>
</evidence>
<evidence type="ECO:0000269" key="11">
    <source>
    </source>
</evidence>
<evidence type="ECO:0000269" key="12">
    <source>
    </source>
</evidence>
<evidence type="ECO:0000269" key="13">
    <source>
    </source>
</evidence>
<evidence type="ECO:0000269" key="14">
    <source>
    </source>
</evidence>
<evidence type="ECO:0000269" key="15">
    <source>
    </source>
</evidence>
<evidence type="ECO:0000303" key="16">
    <source>
    </source>
</evidence>
<evidence type="ECO:0000303" key="17">
    <source>
    </source>
</evidence>
<evidence type="ECO:0000305" key="18"/>
<evidence type="ECO:0000312" key="19">
    <source>
        <dbReference type="Araport" id="AT3G48870"/>
    </source>
</evidence>
<evidence type="ECO:0000312" key="20">
    <source>
        <dbReference type="EMBL" id="CAB87915.1"/>
    </source>
</evidence>
<dbReference type="EC" id="3.6.1.-" evidence="10"/>
<dbReference type="EMBL" id="AB022324">
    <property type="protein sequence ID" value="BAA82062.1"/>
    <property type="molecule type" value="mRNA"/>
</dbReference>
<dbReference type="EMBL" id="AL132963">
    <property type="protein sequence ID" value="CAB87915.1"/>
    <property type="molecule type" value="Genomic_DNA"/>
</dbReference>
<dbReference type="EMBL" id="CP002686">
    <property type="protein sequence ID" value="AEE78466.1"/>
    <property type="molecule type" value="Genomic_DNA"/>
</dbReference>
<dbReference type="EMBL" id="CP002686">
    <property type="protein sequence ID" value="ANM63380.1"/>
    <property type="molecule type" value="Genomic_DNA"/>
</dbReference>
<dbReference type="EMBL" id="CP002686">
    <property type="protein sequence ID" value="ANM63381.1"/>
    <property type="molecule type" value="Genomic_DNA"/>
</dbReference>
<dbReference type="EMBL" id="AY056787">
    <property type="protein sequence ID" value="AAL10478.1"/>
    <property type="status" value="ALT_FRAME"/>
    <property type="molecule type" value="mRNA"/>
</dbReference>
<dbReference type="PIR" id="T49283">
    <property type="entry name" value="T49283"/>
</dbReference>
<dbReference type="PIR" id="T52456">
    <property type="entry name" value="T52456"/>
</dbReference>
<dbReference type="RefSeq" id="NP_001325472.1">
    <molecule id="Q9SXJ7-1"/>
    <property type="nucleotide sequence ID" value="NM_001339385.1"/>
</dbReference>
<dbReference type="RefSeq" id="NP_001325473.1">
    <molecule id="Q9SXJ7-1"/>
    <property type="nucleotide sequence ID" value="NM_001339386.1"/>
</dbReference>
<dbReference type="RefSeq" id="NP_566912.2">
    <molecule id="Q9SXJ7-1"/>
    <property type="nucleotide sequence ID" value="NM_114746.5"/>
</dbReference>
<dbReference type="SMR" id="Q9SXJ7"/>
<dbReference type="BioGRID" id="9366">
    <property type="interactions" value="3"/>
</dbReference>
<dbReference type="FunCoup" id="Q9SXJ7">
    <property type="interactions" value="422"/>
</dbReference>
<dbReference type="IntAct" id="Q9SXJ7">
    <property type="interactions" value="4"/>
</dbReference>
<dbReference type="MINT" id="Q9SXJ7"/>
<dbReference type="STRING" id="3702.Q9SXJ7"/>
<dbReference type="TCDB" id="3.A.9.1.2">
    <property type="family name" value="the chloroplast envelope protein translocase (cept or tic-toc) family"/>
</dbReference>
<dbReference type="MetOSite" id="Q9SXJ7"/>
<dbReference type="SwissPalm" id="Q9SXJ7"/>
<dbReference type="PaxDb" id="3702-AT3G48870.1"/>
<dbReference type="EnsemblPlants" id="AT3G48870.1">
    <molecule id="Q9SXJ7-1"/>
    <property type="protein sequence ID" value="AT3G48870.1"/>
    <property type="gene ID" value="AT3G48870"/>
</dbReference>
<dbReference type="EnsemblPlants" id="AT3G48870.3">
    <molecule id="Q9SXJ7-1"/>
    <property type="protein sequence ID" value="AT3G48870.3"/>
    <property type="gene ID" value="AT3G48870"/>
</dbReference>
<dbReference type="EnsemblPlants" id="AT3G48870.4">
    <molecule id="Q9SXJ7-1"/>
    <property type="protein sequence ID" value="AT3G48870.4"/>
    <property type="gene ID" value="AT3G48870"/>
</dbReference>
<dbReference type="GeneID" id="824048"/>
<dbReference type="Gramene" id="AT3G48870.1">
    <molecule id="Q9SXJ7-1"/>
    <property type="protein sequence ID" value="AT3G48870.1"/>
    <property type="gene ID" value="AT3G48870"/>
</dbReference>
<dbReference type="Gramene" id="AT3G48870.3">
    <molecule id="Q9SXJ7-1"/>
    <property type="protein sequence ID" value="AT3G48870.3"/>
    <property type="gene ID" value="AT3G48870"/>
</dbReference>
<dbReference type="Gramene" id="AT3G48870.4">
    <molecule id="Q9SXJ7-1"/>
    <property type="protein sequence ID" value="AT3G48870.4"/>
    <property type="gene ID" value="AT3G48870"/>
</dbReference>
<dbReference type="KEGG" id="ath:AT3G48870"/>
<dbReference type="Araport" id="AT3G48870"/>
<dbReference type="TAIR" id="AT3G48870">
    <property type="gene designation" value="HSP93-III"/>
</dbReference>
<dbReference type="eggNOG" id="KOG1051">
    <property type="taxonomic scope" value="Eukaryota"/>
</dbReference>
<dbReference type="InParanoid" id="Q9SXJ7"/>
<dbReference type="OrthoDB" id="47330at2759"/>
<dbReference type="PhylomeDB" id="Q9SXJ7"/>
<dbReference type="BRENDA" id="7.4.2.4">
    <property type="organism ID" value="399"/>
</dbReference>
<dbReference type="CD-CODE" id="4299E36E">
    <property type="entry name" value="Nucleolus"/>
</dbReference>
<dbReference type="PRO" id="PR:Q9SXJ7"/>
<dbReference type="Proteomes" id="UP000006548">
    <property type="component" value="Chromosome 3"/>
</dbReference>
<dbReference type="ExpressionAtlas" id="Q9SXJ7">
    <property type="expression patterns" value="baseline and differential"/>
</dbReference>
<dbReference type="GO" id="GO:0009507">
    <property type="term" value="C:chloroplast"/>
    <property type="evidence" value="ECO:0000314"/>
    <property type="project" value="TAIR"/>
</dbReference>
<dbReference type="GO" id="GO:0009941">
    <property type="term" value="C:chloroplast envelope"/>
    <property type="evidence" value="ECO:0007005"/>
    <property type="project" value="TAIR"/>
</dbReference>
<dbReference type="GO" id="GO:0031969">
    <property type="term" value="C:chloroplast membrane"/>
    <property type="evidence" value="ECO:0007669"/>
    <property type="project" value="UniProtKB-SubCell"/>
</dbReference>
<dbReference type="GO" id="GO:0009570">
    <property type="term" value="C:chloroplast stroma"/>
    <property type="evidence" value="ECO:0000314"/>
    <property type="project" value="TAIR"/>
</dbReference>
<dbReference type="GO" id="GO:0005739">
    <property type="term" value="C:mitochondrion"/>
    <property type="evidence" value="ECO:0007005"/>
    <property type="project" value="TAIR"/>
</dbReference>
<dbReference type="GO" id="GO:0009536">
    <property type="term" value="C:plastid"/>
    <property type="evidence" value="ECO:0007005"/>
    <property type="project" value="TAIR"/>
</dbReference>
<dbReference type="GO" id="GO:0009532">
    <property type="term" value="C:plastid stroma"/>
    <property type="evidence" value="ECO:0000314"/>
    <property type="project" value="TAIR"/>
</dbReference>
<dbReference type="GO" id="GO:0032991">
    <property type="term" value="C:protein-containing complex"/>
    <property type="evidence" value="ECO:0000314"/>
    <property type="project" value="TAIR"/>
</dbReference>
<dbReference type="GO" id="GO:0005524">
    <property type="term" value="F:ATP binding"/>
    <property type="evidence" value="ECO:0007669"/>
    <property type="project" value="UniProtKB-KW"/>
</dbReference>
<dbReference type="GO" id="GO:0016887">
    <property type="term" value="F:ATP hydrolysis activity"/>
    <property type="evidence" value="ECO:0000314"/>
    <property type="project" value="TAIR"/>
</dbReference>
<dbReference type="GO" id="GO:0009658">
    <property type="term" value="P:chloroplast organization"/>
    <property type="evidence" value="ECO:0000250"/>
    <property type="project" value="TAIR"/>
</dbReference>
<dbReference type="GO" id="GO:0045037">
    <property type="term" value="P:protein import into chloroplast stroma"/>
    <property type="evidence" value="ECO:0000250"/>
    <property type="project" value="TAIR"/>
</dbReference>
<dbReference type="CDD" id="cd00009">
    <property type="entry name" value="AAA"/>
    <property type="match status" value="1"/>
</dbReference>
<dbReference type="CDD" id="cd19499">
    <property type="entry name" value="RecA-like_ClpB_Hsp104-like"/>
    <property type="match status" value="1"/>
</dbReference>
<dbReference type="FunFam" id="1.10.8.60:FF:000017">
    <property type="entry name" value="ATP-dependent chaperone ClpB"/>
    <property type="match status" value="1"/>
</dbReference>
<dbReference type="FunFam" id="1.10.8.60:FF:000011">
    <property type="entry name" value="ATP-dependent Clp protease ATP-binding subunit"/>
    <property type="match status" value="1"/>
</dbReference>
<dbReference type="FunFam" id="1.10.1780.10:FF:000004">
    <property type="entry name" value="ATP-dependent Clp protease ATP-binding subunit ClpC"/>
    <property type="match status" value="1"/>
</dbReference>
<dbReference type="FunFam" id="3.40.50.300:FF:000025">
    <property type="entry name" value="ATP-dependent Clp protease subunit"/>
    <property type="match status" value="1"/>
</dbReference>
<dbReference type="FunFam" id="3.40.50.300:FF:000010">
    <property type="entry name" value="Chaperone clpB 1, putative"/>
    <property type="match status" value="1"/>
</dbReference>
<dbReference type="Gene3D" id="1.10.8.60">
    <property type="match status" value="2"/>
</dbReference>
<dbReference type="Gene3D" id="1.10.1780.10">
    <property type="entry name" value="Clp, N-terminal domain"/>
    <property type="match status" value="1"/>
</dbReference>
<dbReference type="Gene3D" id="3.40.50.300">
    <property type="entry name" value="P-loop containing nucleotide triphosphate hydrolases"/>
    <property type="match status" value="2"/>
</dbReference>
<dbReference type="Gene3D" id="4.10.860.10">
    <property type="entry name" value="UVR domain"/>
    <property type="match status" value="1"/>
</dbReference>
<dbReference type="InterPro" id="IPR003593">
    <property type="entry name" value="AAA+_ATPase"/>
</dbReference>
<dbReference type="InterPro" id="IPR003959">
    <property type="entry name" value="ATPase_AAA_core"/>
</dbReference>
<dbReference type="InterPro" id="IPR019489">
    <property type="entry name" value="Clp_ATPase_C"/>
</dbReference>
<dbReference type="InterPro" id="IPR036628">
    <property type="entry name" value="Clp_N_dom_sf"/>
</dbReference>
<dbReference type="InterPro" id="IPR004176">
    <property type="entry name" value="Clp_R_dom"/>
</dbReference>
<dbReference type="InterPro" id="IPR001270">
    <property type="entry name" value="ClpA/B"/>
</dbReference>
<dbReference type="InterPro" id="IPR018368">
    <property type="entry name" value="ClpA/B_CS1"/>
</dbReference>
<dbReference type="InterPro" id="IPR028299">
    <property type="entry name" value="ClpA/B_CS2"/>
</dbReference>
<dbReference type="InterPro" id="IPR041546">
    <property type="entry name" value="ClpA/ClpB_AAA_lid"/>
</dbReference>
<dbReference type="InterPro" id="IPR050130">
    <property type="entry name" value="ClpA_ClpB"/>
</dbReference>
<dbReference type="InterPro" id="IPR027417">
    <property type="entry name" value="P-loop_NTPase"/>
</dbReference>
<dbReference type="InterPro" id="IPR001943">
    <property type="entry name" value="UVR_dom"/>
</dbReference>
<dbReference type="PANTHER" id="PTHR11638">
    <property type="entry name" value="ATP-DEPENDENT CLP PROTEASE"/>
    <property type="match status" value="1"/>
</dbReference>
<dbReference type="PANTHER" id="PTHR11638:SF155">
    <property type="entry name" value="CHAPERONE PROTEIN CLPC1, CHLOROPLASTIC-LIKE"/>
    <property type="match status" value="1"/>
</dbReference>
<dbReference type="Pfam" id="PF00004">
    <property type="entry name" value="AAA"/>
    <property type="match status" value="1"/>
</dbReference>
<dbReference type="Pfam" id="PF07724">
    <property type="entry name" value="AAA_2"/>
    <property type="match status" value="1"/>
</dbReference>
<dbReference type="Pfam" id="PF17871">
    <property type="entry name" value="AAA_lid_9"/>
    <property type="match status" value="1"/>
</dbReference>
<dbReference type="Pfam" id="PF02861">
    <property type="entry name" value="Clp_N"/>
    <property type="match status" value="2"/>
</dbReference>
<dbReference type="Pfam" id="PF10431">
    <property type="entry name" value="ClpB_D2-small"/>
    <property type="match status" value="1"/>
</dbReference>
<dbReference type="PRINTS" id="PR00300">
    <property type="entry name" value="CLPPROTEASEA"/>
</dbReference>
<dbReference type="SMART" id="SM00382">
    <property type="entry name" value="AAA"/>
    <property type="match status" value="2"/>
</dbReference>
<dbReference type="SMART" id="SM01086">
    <property type="entry name" value="ClpB_D2-small"/>
    <property type="match status" value="1"/>
</dbReference>
<dbReference type="SUPFAM" id="SSF81923">
    <property type="entry name" value="Double Clp-N motif"/>
    <property type="match status" value="1"/>
</dbReference>
<dbReference type="SUPFAM" id="SSF52540">
    <property type="entry name" value="P-loop containing nucleoside triphosphate hydrolases"/>
    <property type="match status" value="2"/>
</dbReference>
<dbReference type="PROSITE" id="PS51903">
    <property type="entry name" value="CLP_R"/>
    <property type="match status" value="1"/>
</dbReference>
<dbReference type="PROSITE" id="PS00870">
    <property type="entry name" value="CLPAB_1"/>
    <property type="match status" value="1"/>
</dbReference>
<dbReference type="PROSITE" id="PS00871">
    <property type="entry name" value="CLPAB_2"/>
    <property type="match status" value="1"/>
</dbReference>
<dbReference type="PROSITE" id="PS50151">
    <property type="entry name" value="UVR"/>
    <property type="match status" value="1"/>
</dbReference>
<organism>
    <name type="scientific">Arabidopsis thaliana</name>
    <name type="common">Mouse-ear cress</name>
    <dbReference type="NCBI Taxonomy" id="3702"/>
    <lineage>
        <taxon>Eukaryota</taxon>
        <taxon>Viridiplantae</taxon>
        <taxon>Streptophyta</taxon>
        <taxon>Embryophyta</taxon>
        <taxon>Tracheophyta</taxon>
        <taxon>Spermatophyta</taxon>
        <taxon>Magnoliopsida</taxon>
        <taxon>eudicotyledons</taxon>
        <taxon>Gunneridae</taxon>
        <taxon>Pentapetalae</taxon>
        <taxon>rosids</taxon>
        <taxon>malvids</taxon>
        <taxon>Brassicales</taxon>
        <taxon>Brassicaceae</taxon>
        <taxon>Camelineae</taxon>
        <taxon>Arabidopsis</taxon>
    </lineage>
</organism>
<protein>
    <recommendedName>
        <fullName evidence="16">Chaperone protein ClpC2, chloroplastic</fullName>
        <ecNumber evidence="10">3.6.1.-</ecNumber>
    </recommendedName>
    <alternativeName>
        <fullName>ATP-dependent Clp protease ATP-binding subunit ClpC homolog 2</fullName>
    </alternativeName>
    <alternativeName>
        <fullName>AtClpC</fullName>
    </alternativeName>
    <alternativeName>
        <fullName>Casein lytic proteinase C2</fullName>
    </alternativeName>
</protein>
<comment type="function">
    <text evidence="6 9 10 11 13">Molecular chaperone (PubMed:15304652, PubMed:21737456, PubMed:24599948). May act as a suppressor of FtsH-mediated thylakoid membrane biogenesis and may enhance photoinhibition (PubMed:15304652). Seems not involved in chloroplastic protein import (PubMed:15304652). Probable component of the TIC-associated stromal import motor involved in inner membrane translocation (PubMed:17376159). Has an ATPase activity, but no ADPase activity (PubMed:21737456). Interacts with transit peptides with a positional preference (PubMed:21737456, PubMed:22545953). Localization of the signal sequence at the N-terminal end of a protein seems mandatory for interaction to take place (PubMed:22545953).</text>
</comment>
<comment type="catalytic activity">
    <reaction evidence="10">
        <text>ATP + H2O = ADP + phosphate + H(+)</text>
        <dbReference type="Rhea" id="RHEA:13065"/>
        <dbReference type="ChEBI" id="CHEBI:15377"/>
        <dbReference type="ChEBI" id="CHEBI:15378"/>
        <dbReference type="ChEBI" id="CHEBI:30616"/>
        <dbReference type="ChEBI" id="CHEBI:43474"/>
        <dbReference type="ChEBI" id="CHEBI:456216"/>
    </reaction>
</comment>
<comment type="cofactor">
    <cofactor evidence="10">
        <name>Mg(2+)</name>
        <dbReference type="ChEBI" id="CHEBI:18420"/>
    </cofactor>
</comment>
<comment type="biophysicochemical properties">
    <kinetics>
        <KM evidence="10">1.42 mM for ATP</KM>
        <Vmax evidence="10">0.62 nmol/min/ug enzyme</Vmax>
    </kinetics>
    <phDependence>
        <text evidence="10">Optimum pH is 7.5.</text>
    </phDependence>
    <temperatureDependence>
        <text evidence="10">Optimum temperature is 55 degrees Celsius.</text>
    </temperatureDependence>
</comment>
<comment type="subunit">
    <text evidence="10 12 14 15">Homodimer and homohexamer (PubMed:21737456). Hexamerization upon addition of ATP (PubMed:21737456). Interacts with CLPT1 (PubMed:25149061). Interacts with CLPS1 (PubMed:23898032). Stably associated with the import machinery (PubMed:21737456). Interacts with CLPF (PubMed:26419670).</text>
</comment>
<comment type="subcellular location">
    <subcellularLocation>
        <location evidence="5 10 13">Plastid</location>
        <location evidence="5 10 13">Chloroplast stroma</location>
    </subcellularLocation>
    <subcellularLocation>
        <location evidence="10 13">Plastid</location>
        <location evidence="10 13">Chloroplast membrane</location>
    </subcellularLocation>
</comment>
<comment type="alternative products">
    <event type="alternative splicing"/>
    <isoform>
        <id>Q9SXJ7-1</id>
        <name>1</name>
        <sequence type="displayed"/>
    </isoform>
    <text>A number of isoforms are produced. According to EST sequences.</text>
</comment>
<comment type="tissue specificity">
    <text evidence="7 12">Expressed at low levels in roots and inflorescences (PubMed:15659100). Expressed at very low levels in rosette leaves (PubMed:15659100). Expressed in photosynthetic green tissues with high levels in young, developing leaf tissues (PubMed:23898032).</text>
</comment>
<comment type="induction">
    <text evidence="5 8">By senescence. Not induced by heat stress.</text>
</comment>
<comment type="disruption phenotype">
    <text evidence="9">No visible phenotype (PubMed:17376159). Clpc1 and clpc2 double mutants are embryo lethal when homozygous (PubMed:17376159).</text>
</comment>
<comment type="similarity">
    <text evidence="18">Belongs to the ClpA/ClpB family. ClpC subfamily.</text>
</comment>
<comment type="sequence caution" evidence="18">
    <conflict type="frameshift">
        <sequence resource="EMBL-CDS" id="AAL10478"/>
    </conflict>
</comment>
<proteinExistence type="evidence at protein level"/>
<accession>Q9SXJ7</accession>
<accession>A0A1I9LLC3</accession>
<accession>Q93ZM4</accession>
<accession>Q9M2Z6</accession>
<gene>
    <name evidence="16" type="primary">CLPC2</name>
    <name evidence="17" type="synonym">HSP93-III</name>
    <name evidence="19" type="ordered locus">At3g48870</name>
    <name evidence="20" type="ORF">T21J18.140</name>
</gene>
<name>CLPC2_ARATH</name>
<sequence>MAWSIALLTPPFFGPGRHVQAKEYREPRGCVMKMSSLKAPVLRIQATEYREPRGRVKMMSSLQAPLLTIQSFSGLRAPSALDYLGRPSPGFLVKYKLAKSSGREKASRCVPKAMFERFTEKAIKVIMLSQEEARRLGHNFVGTEQILLGLIGEGTGIAAKVLKSMGINLKDSRVEVEKIIGRGSGFVAVEIPFTPRAKRVLELSLEEARQLGHNYIGSEHLLLGLLREGEGVAARVLENLGADPSNIRTQVIRMVGENNEVTASVGGGSSGNSKMPTLEEYGTNLTKLAEEGKLDPVVGRQPQIERVVQILARRTKNNPCLIGEPGVGKTAIAEGLAQRIASGDVPETIEGKTVITLDMGLLVAGTKYRGEFEERLKKLMEEIRQSDEIILFIDEVHTLIGAGAAEGAIDAANILKPALARGELQCIGATTIDEYRKHIEKDPALERRFQPVKVPEPTVEEAIQILQGLRERYEIHHKLRYTDEALVAAAQLSHQYISDRFLPDKAIDLIDEAGSRVRLRHAQLPEEARELEKQLRQITKEKNEAVRSQDFEMAGSHRDREIELKAEIANVLSRGKEVAKAENEAEEGGPTVTESDIQHIVATWTGIPVEKVSSDESSRLLQMEQTLHTRVIGQDEAVKAISRAIRRARVGLKNPNRPIASFIFSGPTGVGKSELAKALAAYYFGSEEAMIRLDMSEFMERHTVSKLIGSPPGYVGYTEGGQLTEAVRRRPYTLVLFDEIEKAHPDVFNMMLQILEDGRLTDSKGRTVDFKNTLLIMTSNVGSSVIEKGGRRIGFDLDHDEKDSSYNRIKSLVTEELKQYFRPEFLNRLDEMIVFRQLTKLEVKEIADIMLKEVVARLEVKEIELQVTERFKERVVDEGFDPSYGARPLRRAIMRLLEDSMAEKMLSRDIKEGDSVIVDVDAEGSVVVLSGTTGRVGGFAAEEAMEDPIPIL</sequence>
<reference key="1">
    <citation type="journal article" date="1999" name="Plant Cell Physiol.">
        <title>Identification of clp genes expressed in senescing Arabidopsis leaves.</title>
        <authorList>
            <person name="Nakabayashi K."/>
            <person name="Ito M."/>
            <person name="Kiyosue T."/>
            <person name="Shinozaki K."/>
            <person name="Watanabe A."/>
        </authorList>
    </citation>
    <scope>NUCLEOTIDE SEQUENCE [MRNA]</scope>
    <scope>SUBCELLULAR LOCATION</scope>
    <scope>INDUCTION BY SENESCENCE</scope>
    <source>
        <strain>cv. Columbia</strain>
    </source>
</reference>
<reference key="2">
    <citation type="journal article" date="2000" name="Nature">
        <title>Sequence and analysis of chromosome 3 of the plant Arabidopsis thaliana.</title>
        <authorList>
            <person name="Salanoubat M."/>
            <person name="Lemcke K."/>
            <person name="Rieger M."/>
            <person name="Ansorge W."/>
            <person name="Unseld M."/>
            <person name="Fartmann B."/>
            <person name="Valle G."/>
            <person name="Bloecker H."/>
            <person name="Perez-Alonso M."/>
            <person name="Obermaier B."/>
            <person name="Delseny M."/>
            <person name="Boutry M."/>
            <person name="Grivell L.A."/>
            <person name="Mache R."/>
            <person name="Puigdomenech P."/>
            <person name="De Simone V."/>
            <person name="Choisne N."/>
            <person name="Artiguenave F."/>
            <person name="Robert C."/>
            <person name="Brottier P."/>
            <person name="Wincker P."/>
            <person name="Cattolico L."/>
            <person name="Weissenbach J."/>
            <person name="Saurin W."/>
            <person name="Quetier F."/>
            <person name="Schaefer M."/>
            <person name="Mueller-Auer S."/>
            <person name="Gabel C."/>
            <person name="Fuchs M."/>
            <person name="Benes V."/>
            <person name="Wurmbach E."/>
            <person name="Drzonek H."/>
            <person name="Erfle H."/>
            <person name="Jordan N."/>
            <person name="Bangert S."/>
            <person name="Wiedelmann R."/>
            <person name="Kranz H."/>
            <person name="Voss H."/>
            <person name="Holland R."/>
            <person name="Brandt P."/>
            <person name="Nyakatura G."/>
            <person name="Vezzi A."/>
            <person name="D'Angelo M."/>
            <person name="Pallavicini A."/>
            <person name="Toppo S."/>
            <person name="Simionati B."/>
            <person name="Conrad A."/>
            <person name="Hornischer K."/>
            <person name="Kauer G."/>
            <person name="Loehnert T.-H."/>
            <person name="Nordsiek G."/>
            <person name="Reichelt J."/>
            <person name="Scharfe M."/>
            <person name="Schoen O."/>
            <person name="Bargues M."/>
            <person name="Terol J."/>
            <person name="Climent J."/>
            <person name="Navarro P."/>
            <person name="Collado C."/>
            <person name="Perez-Perez A."/>
            <person name="Ottenwaelder B."/>
            <person name="Duchemin D."/>
            <person name="Cooke R."/>
            <person name="Laudie M."/>
            <person name="Berger-Llauro C."/>
            <person name="Purnelle B."/>
            <person name="Masuy D."/>
            <person name="de Haan M."/>
            <person name="Maarse A.C."/>
            <person name="Alcaraz J.-P."/>
            <person name="Cottet A."/>
            <person name="Casacuberta E."/>
            <person name="Monfort A."/>
            <person name="Argiriou A."/>
            <person name="Flores M."/>
            <person name="Liguori R."/>
            <person name="Vitale D."/>
            <person name="Mannhaupt G."/>
            <person name="Haase D."/>
            <person name="Schoof H."/>
            <person name="Rudd S."/>
            <person name="Zaccaria P."/>
            <person name="Mewes H.-W."/>
            <person name="Mayer K.F.X."/>
            <person name="Kaul S."/>
            <person name="Town C.D."/>
            <person name="Koo H.L."/>
            <person name="Tallon L.J."/>
            <person name="Jenkins J."/>
            <person name="Rooney T."/>
            <person name="Rizzo M."/>
            <person name="Walts A."/>
            <person name="Utterback T."/>
            <person name="Fujii C.Y."/>
            <person name="Shea T.P."/>
            <person name="Creasy T.H."/>
            <person name="Haas B."/>
            <person name="Maiti R."/>
            <person name="Wu D."/>
            <person name="Peterson J."/>
            <person name="Van Aken S."/>
            <person name="Pai G."/>
            <person name="Militscher J."/>
            <person name="Sellers P."/>
            <person name="Gill J.E."/>
            <person name="Feldblyum T.V."/>
            <person name="Preuss D."/>
            <person name="Lin X."/>
            <person name="Nierman W.C."/>
            <person name="Salzberg S.L."/>
            <person name="White O."/>
            <person name="Venter J.C."/>
            <person name="Fraser C.M."/>
            <person name="Kaneko T."/>
            <person name="Nakamura Y."/>
            <person name="Sato S."/>
            <person name="Kato T."/>
            <person name="Asamizu E."/>
            <person name="Sasamoto S."/>
            <person name="Kimura T."/>
            <person name="Idesawa K."/>
            <person name="Kawashima K."/>
            <person name="Kishida Y."/>
            <person name="Kiyokawa C."/>
            <person name="Kohara M."/>
            <person name="Matsumoto M."/>
            <person name="Matsuno A."/>
            <person name="Muraki A."/>
            <person name="Nakayama S."/>
            <person name="Nakazaki N."/>
            <person name="Shinpo S."/>
            <person name="Takeuchi C."/>
            <person name="Wada T."/>
            <person name="Watanabe A."/>
            <person name="Yamada M."/>
            <person name="Yasuda M."/>
            <person name="Tabata S."/>
        </authorList>
    </citation>
    <scope>NUCLEOTIDE SEQUENCE [LARGE SCALE GENOMIC DNA]</scope>
    <source>
        <strain>cv. Columbia</strain>
    </source>
</reference>
<reference key="3">
    <citation type="journal article" date="2017" name="Plant J.">
        <title>Araport11: a complete reannotation of the Arabidopsis thaliana reference genome.</title>
        <authorList>
            <person name="Cheng C.Y."/>
            <person name="Krishnakumar V."/>
            <person name="Chan A.P."/>
            <person name="Thibaud-Nissen F."/>
            <person name="Schobel S."/>
            <person name="Town C.D."/>
        </authorList>
    </citation>
    <scope>GENOME REANNOTATION</scope>
    <source>
        <strain>cv. Columbia</strain>
    </source>
</reference>
<reference key="4">
    <citation type="journal article" date="2003" name="Science">
        <title>Empirical analysis of transcriptional activity in the Arabidopsis genome.</title>
        <authorList>
            <person name="Yamada K."/>
            <person name="Lim J."/>
            <person name="Dale J.M."/>
            <person name="Chen H."/>
            <person name="Shinn P."/>
            <person name="Palm C.J."/>
            <person name="Southwick A.M."/>
            <person name="Wu H.C."/>
            <person name="Kim C.J."/>
            <person name="Nguyen M."/>
            <person name="Pham P.K."/>
            <person name="Cheuk R.F."/>
            <person name="Karlin-Newmann G."/>
            <person name="Liu S.X."/>
            <person name="Lam B."/>
            <person name="Sakano H."/>
            <person name="Wu T."/>
            <person name="Yu G."/>
            <person name="Miranda M."/>
            <person name="Quach H.L."/>
            <person name="Tripp M."/>
            <person name="Chang C.H."/>
            <person name="Lee J.M."/>
            <person name="Toriumi M.J."/>
            <person name="Chan M.M."/>
            <person name="Tang C.C."/>
            <person name="Onodera C.S."/>
            <person name="Deng J.M."/>
            <person name="Akiyama K."/>
            <person name="Ansari Y."/>
            <person name="Arakawa T."/>
            <person name="Banh J."/>
            <person name="Banno F."/>
            <person name="Bowser L."/>
            <person name="Brooks S.Y."/>
            <person name="Carninci P."/>
            <person name="Chao Q."/>
            <person name="Choy N."/>
            <person name="Enju A."/>
            <person name="Goldsmith A.D."/>
            <person name="Gurjal M."/>
            <person name="Hansen N.F."/>
            <person name="Hayashizaki Y."/>
            <person name="Johnson-Hopson C."/>
            <person name="Hsuan V.W."/>
            <person name="Iida K."/>
            <person name="Karnes M."/>
            <person name="Khan S."/>
            <person name="Koesema E."/>
            <person name="Ishida J."/>
            <person name="Jiang P.X."/>
            <person name="Jones T."/>
            <person name="Kawai J."/>
            <person name="Kamiya A."/>
            <person name="Meyers C."/>
            <person name="Nakajima M."/>
            <person name="Narusaka M."/>
            <person name="Seki M."/>
            <person name="Sakurai T."/>
            <person name="Satou M."/>
            <person name="Tamse R."/>
            <person name="Vaysberg M."/>
            <person name="Wallender E.K."/>
            <person name="Wong C."/>
            <person name="Yamamura Y."/>
            <person name="Yuan S."/>
            <person name="Shinozaki K."/>
            <person name="Davis R.W."/>
            <person name="Theologis A."/>
            <person name="Ecker J.R."/>
        </authorList>
    </citation>
    <scope>NUCLEOTIDE SEQUENCE [LARGE SCALE MRNA]</scope>
    <source>
        <strain>cv. Columbia</strain>
    </source>
</reference>
<reference key="5">
    <citation type="journal article" date="2001" name="Plant Physiol.">
        <title>Chloroplast and mitochondrial proteases in Arabidopsis. A proposed nomenclature.</title>
        <authorList>
            <person name="Adam Z."/>
            <person name="Adamska I."/>
            <person name="Nakabayashi K."/>
            <person name="Ostersetzer O."/>
            <person name="Haussuhl K."/>
            <person name="Manuell A."/>
            <person name="Zheng B."/>
            <person name="Vallon O."/>
            <person name="Rodermel S.R."/>
            <person name="Shinozaki K."/>
            <person name="Clarke A.K."/>
        </authorList>
    </citation>
    <scope>GENE FAMILY</scope>
    <scope>NOMENCLATURE</scope>
</reference>
<reference key="6">
    <citation type="journal article" date="2004" name="Proc. Natl. Acad. Sci. U.S.A.">
        <title>Mutations in ClpC2/Hsp100 suppress the requirement for FtsH in thylakoid membrane biogenesis.</title>
        <authorList>
            <person name="Park S."/>
            <person name="Rodermel S.R."/>
        </authorList>
    </citation>
    <scope>FUNCTION</scope>
</reference>
<reference key="7">
    <citation type="journal article" date="2005" name="Physiol. Plantarum">
        <title>The ATP-dependent Clp protease in chloroplasts of higher plants.</title>
        <authorList>
            <person name="Clarke A.K."/>
            <person name="MacDonald T.M."/>
            <person name="Sjoegren L.L."/>
        </authorList>
    </citation>
    <scope>NOMENCLATURE</scope>
</reference>
<reference key="8">
    <citation type="journal article" date="2005" name="Plant J.">
        <title>In vivo studies on the roles of Tic110, Tic40 and Hsp93 during chloroplast protein import.</title>
        <authorList>
            <person name="Kovacheva S."/>
            <person name="Bedard J."/>
            <person name="Patel R."/>
            <person name="Dudley P."/>
            <person name="Twell D."/>
            <person name="Rios G."/>
            <person name="Koncz C."/>
            <person name="Jarvis P."/>
        </authorList>
    </citation>
    <scope>TISSUE SPECIFICITY</scope>
</reference>
<reference key="9">
    <citation type="journal article" date="2007" name="Plant J.">
        <title>Further in vivo studies on the role of the molecular chaperone, Hsp93, in plastid protein import.</title>
        <authorList>
            <person name="Kovacheva S."/>
            <person name="Bedard J."/>
            <person name="Wardle A."/>
            <person name="Patel R."/>
            <person name="Jarvis P."/>
        </authorList>
    </citation>
    <scope>FUNCTION</scope>
    <scope>DISRUPTION PHENOTYPE</scope>
</reference>
<reference key="10">
    <citation type="journal article" date="2007" name="Plant J.">
        <title>The Arabidopsis ClpB/Hsp100 family of proteins: chaperones for stress and chloroplast development.</title>
        <authorList>
            <person name="Lee U."/>
            <person name="Rioflorido I."/>
            <person name="Hong S.W."/>
            <person name="Larkindale J."/>
            <person name="Waters E.R."/>
            <person name="Vierling E."/>
        </authorList>
    </citation>
    <scope>INDUCTION</scope>
</reference>
<reference key="11">
    <citation type="journal article" date="2011" name="J. Biol. Chem.">
        <title>Insights into the Clp/HSP100 chaperone system from chloroplasts of Arabidopsis thaliana.</title>
        <authorList>
            <person name="Rosano G.L."/>
            <person name="Bruch E.M."/>
            <person name="Ceccarelli E.A."/>
        </authorList>
    </citation>
    <scope>FUNCTION</scope>
    <scope>CATALYTIC ACTIVITY</scope>
    <scope>BIOPHYSICOCHEMICAL PROPERTIES</scope>
    <scope>COFACTOR</scope>
    <scope>SUBUNIT</scope>
    <scope>SUBCELLULAR LOCATION</scope>
</reference>
<reference key="12">
    <citation type="journal article" date="2012" name="BMC Plant Biol.">
        <title>Chloroplastic Hsp100 chaperones ClpC2 and ClpD interact in vitro with a transit peptide only when it is located at the N-terminus of a protein.</title>
        <authorList>
            <person name="Bruch E.M."/>
            <person name="Rosano G.L."/>
            <person name="Ceccarelli E.A."/>
        </authorList>
    </citation>
    <scope>FUNCTION</scope>
</reference>
<reference key="13">
    <citation type="journal article" date="2012" name="Physiol. Plantarum">
        <title>The chloroplast ATP-dependent Clp protease in vascular plants - new dimensions and future challenges.</title>
        <authorList>
            <person name="Clarke A.K."/>
        </authorList>
    </citation>
    <scope>REVIEW</scope>
</reference>
<reference key="14">
    <citation type="journal article" date="2013" name="Plant Cell">
        <title>ClpS1 is a conserved substrate selector for the chloroplast Clp protease system in Arabidopsis.</title>
        <authorList>
            <person name="Nishimura K."/>
            <person name="Asakura Y."/>
            <person name="Friso G."/>
            <person name="Kim J."/>
            <person name="Oh S.H."/>
            <person name="Rutschow H."/>
            <person name="Ponnala L."/>
            <person name="van Wijk K.J."/>
        </authorList>
    </citation>
    <scope>TISSUE SPECIFICITY</scope>
    <scope>INTERACTION WITH CLPS1</scope>
</reference>
<reference key="15">
    <citation type="journal article" date="2014" name="BMC Plant Biol.">
        <title>Characterization of the accessory protein ClpT1 from Arabidopsis thaliana: oligomerization status and interaction with Hsp100 chaperones.</title>
        <authorList>
            <person name="Colombo C.V."/>
            <person name="Ceccarelli E.A."/>
            <person name="Rosano G.L."/>
        </authorList>
    </citation>
    <scope>INTERACTION WITH CLPT1</scope>
</reference>
<reference key="16">
    <citation type="journal article" date="2014" name="J. Biol. Chem.">
        <title>Quantitative analysis of the chloroplast molecular chaperone ClpC/Hsp93 in Arabidopsis reveals new insights into its localization, interaction with the Clp proteolytic core, and functional importance.</title>
        <authorList>
            <person name="Sjoegren L.L."/>
            <person name="Tanabe N."/>
            <person name="Lymperopoulos P."/>
            <person name="Khan N.Z."/>
            <person name="Rodermel S.R."/>
            <person name="Aronsson H."/>
            <person name="Clarke A.K."/>
        </authorList>
    </citation>
    <scope>FUNCTION</scope>
    <scope>SUBCELLULAR LOCATION</scope>
</reference>
<reference key="17">
    <citation type="journal article" date="2015" name="Plant Cell">
        <title>Discovery of a unique Clp Component, ClpF, in chloroplasts: A proposed binary ClpF-ClpS1 adaptor complex functions in substrate recognition and delivery.</title>
        <authorList>
            <person name="Nishimura K."/>
            <person name="Apitz J."/>
            <person name="Friso G."/>
            <person name="Kim J."/>
            <person name="Ponnala L."/>
            <person name="Grimm B."/>
            <person name="van Wijk K.J."/>
        </authorList>
    </citation>
    <scope>INTERACTION WITH CLPF</scope>
</reference>
<keyword id="KW-0025">Alternative splicing</keyword>
<keyword id="KW-0067">ATP-binding</keyword>
<keyword id="KW-0143">Chaperone</keyword>
<keyword id="KW-0150">Chloroplast</keyword>
<keyword id="KW-0378">Hydrolase</keyword>
<keyword id="KW-0472">Membrane</keyword>
<keyword id="KW-0547">Nucleotide-binding</keyword>
<keyword id="KW-0934">Plastid</keyword>
<keyword id="KW-1185">Reference proteome</keyword>
<keyword id="KW-0677">Repeat</keyword>
<keyword id="KW-0809">Transit peptide</keyword>